<evidence type="ECO:0000255" key="1">
    <source>
        <dbReference type="HAMAP-Rule" id="MF_01514"/>
    </source>
</evidence>
<sequence>MSMAGAERPVSSAAGLPVRWALAVVLGLLAIQATVLFAMGRVPICTCGTVKLWHGVVMSSENSQHLTDWYTFSHIIHGFLFYAGTWLLLRRWPWTARLIVAVLIEGAWELTENSSFIIERYRAGTISLDYYGDSIVNSVADTLAMISGFLLARWLPVTATVAIAVLFEVLVGLHIRDNLTLNVIMLIHPFDAIRQWQAGPPII</sequence>
<dbReference type="EMBL" id="BX572593">
    <property type="protein sequence ID" value="CAE25751.1"/>
    <property type="molecule type" value="Genomic_DNA"/>
</dbReference>
<dbReference type="RefSeq" id="WP_011155875.1">
    <property type="nucleotide sequence ID" value="NZ_CP116810.1"/>
</dbReference>
<dbReference type="STRING" id="258594.RPA0307"/>
<dbReference type="GeneID" id="66891317"/>
<dbReference type="eggNOG" id="ENOG502ZZUX">
    <property type="taxonomic scope" value="Bacteria"/>
</dbReference>
<dbReference type="HOGENOM" id="CLU_1395337_0_0_5"/>
<dbReference type="PhylomeDB" id="P61415"/>
<dbReference type="GO" id="GO:0005886">
    <property type="term" value="C:plasma membrane"/>
    <property type="evidence" value="ECO:0007669"/>
    <property type="project" value="UniProtKB-SubCell"/>
</dbReference>
<dbReference type="HAMAP" id="MF_01514">
    <property type="entry name" value="UPF0314"/>
    <property type="match status" value="1"/>
</dbReference>
<dbReference type="InterPro" id="IPR019691">
    <property type="entry name" value="DUF2585"/>
</dbReference>
<dbReference type="NCBIfam" id="NF002099">
    <property type="entry name" value="PRK00944.1"/>
    <property type="match status" value="1"/>
</dbReference>
<dbReference type="Pfam" id="PF10755">
    <property type="entry name" value="DUF2585"/>
    <property type="match status" value="1"/>
</dbReference>
<name>Y307_RHOPA</name>
<comment type="subcellular location">
    <subcellularLocation>
        <location evidence="1">Cell membrane</location>
        <topology evidence="1">Multi-pass membrane protein</topology>
    </subcellularLocation>
</comment>
<comment type="similarity">
    <text evidence="1">Belongs to the UPF0314 family.</text>
</comment>
<gene>
    <name type="ordered locus">RPA0307</name>
</gene>
<reference key="1">
    <citation type="journal article" date="2004" name="Nat. Biotechnol.">
        <title>Complete genome sequence of the metabolically versatile photosynthetic bacterium Rhodopseudomonas palustris.</title>
        <authorList>
            <person name="Larimer F.W."/>
            <person name="Chain P."/>
            <person name="Hauser L."/>
            <person name="Lamerdin J.E."/>
            <person name="Malfatti S."/>
            <person name="Do L."/>
            <person name="Land M.L."/>
            <person name="Pelletier D.A."/>
            <person name="Beatty J.T."/>
            <person name="Lang A.S."/>
            <person name="Tabita F.R."/>
            <person name="Gibson J.L."/>
            <person name="Hanson T.E."/>
            <person name="Bobst C."/>
            <person name="Torres y Torres J.L."/>
            <person name="Peres C."/>
            <person name="Harrison F.H."/>
            <person name="Gibson J."/>
            <person name="Harwood C.S."/>
        </authorList>
    </citation>
    <scope>NUCLEOTIDE SEQUENCE [LARGE SCALE GENOMIC DNA]</scope>
    <source>
        <strain>ATCC BAA-98 / CGA009</strain>
    </source>
</reference>
<protein>
    <recommendedName>
        <fullName evidence="1">UPF0314 protein RPA0307</fullName>
    </recommendedName>
</protein>
<organism>
    <name type="scientific">Rhodopseudomonas palustris (strain ATCC BAA-98 / CGA009)</name>
    <dbReference type="NCBI Taxonomy" id="258594"/>
    <lineage>
        <taxon>Bacteria</taxon>
        <taxon>Pseudomonadati</taxon>
        <taxon>Pseudomonadota</taxon>
        <taxon>Alphaproteobacteria</taxon>
        <taxon>Hyphomicrobiales</taxon>
        <taxon>Nitrobacteraceae</taxon>
        <taxon>Rhodopseudomonas</taxon>
    </lineage>
</organism>
<feature type="chain" id="PRO_0000217149" description="UPF0314 protein RPA0307">
    <location>
        <begin position="1"/>
        <end position="203"/>
    </location>
</feature>
<feature type="transmembrane region" description="Helical" evidence="1">
    <location>
        <begin position="20"/>
        <end position="40"/>
    </location>
</feature>
<feature type="transmembrane region" description="Helical" evidence="1">
    <location>
        <begin position="69"/>
        <end position="89"/>
    </location>
</feature>
<feature type="transmembrane region" description="Helical" evidence="1">
    <location>
        <begin position="155"/>
        <end position="175"/>
    </location>
</feature>
<proteinExistence type="inferred from homology"/>
<accession>P61415</accession>
<keyword id="KW-1003">Cell membrane</keyword>
<keyword id="KW-0472">Membrane</keyword>
<keyword id="KW-0812">Transmembrane</keyword>
<keyword id="KW-1133">Transmembrane helix</keyword>